<evidence type="ECO:0000250" key="1"/>
<evidence type="ECO:0000255" key="2">
    <source>
        <dbReference type="PROSITE-ProRule" id="PRU10035"/>
    </source>
</evidence>
<evidence type="ECO:0000255" key="3">
    <source>
        <dbReference type="PROSITE-ProRule" id="PRU10036"/>
    </source>
</evidence>
<evidence type="ECO:0000269" key="4">
    <source>
    </source>
</evidence>
<evidence type="ECO:0000305" key="5"/>
<organism>
    <name type="scientific">Laticauda colubrina</name>
    <name type="common">Yellow-lipped sea krait</name>
    <name type="synonym">Banded sea krait</name>
    <dbReference type="NCBI Taxonomy" id="8628"/>
    <lineage>
        <taxon>Eukaryota</taxon>
        <taxon>Metazoa</taxon>
        <taxon>Chordata</taxon>
        <taxon>Craniata</taxon>
        <taxon>Vertebrata</taxon>
        <taxon>Euteleostomi</taxon>
        <taxon>Lepidosauria</taxon>
        <taxon>Squamata</taxon>
        <taxon>Bifurcata</taxon>
        <taxon>Unidentata</taxon>
        <taxon>Episquamata</taxon>
        <taxon>Toxicofera</taxon>
        <taxon>Serpentes</taxon>
        <taxon>Colubroidea</taxon>
        <taxon>Elapidae</taxon>
        <taxon>Laticaudinae</taxon>
        <taxon>Laticauda</taxon>
    </lineage>
</organism>
<accession>P10116</accession>
<keyword id="KW-0106">Calcium</keyword>
<keyword id="KW-0903">Direct protein sequencing</keyword>
<keyword id="KW-1015">Disulfide bond</keyword>
<keyword id="KW-0378">Hydrolase</keyword>
<keyword id="KW-0442">Lipid degradation</keyword>
<keyword id="KW-0443">Lipid metabolism</keyword>
<keyword id="KW-0479">Metal-binding</keyword>
<keyword id="KW-0528">Neurotoxin</keyword>
<keyword id="KW-0638">Presynaptic neurotoxin</keyword>
<keyword id="KW-0964">Secreted</keyword>
<keyword id="KW-0800">Toxin</keyword>
<sequence length="118" mass="13353">NLIQFSELIQCANKGKRATYYYMDYGCYCGKGGSGTPVDDLDRCCKTHDDCYGQAEKKGCFPFLTLYNFICFPGGPTCDRGTTCQRFVCDCDIQAAFCFARSPYNNKNYNINISKRCK</sequence>
<reference key="1">
    <citation type="journal article" date="1988" name="Biochem. J.">
        <title>Isolation, properties and amino acid sequences of a phospholipase A2 and its homologue without activity from the venom of a sea snake, Laticauda colubrina, from the Solomon Islands.</title>
        <authorList>
            <person name="Takasaki C."/>
            <person name="Kimura S."/>
            <person name="Kokubun Y."/>
            <person name="Tamiya N."/>
        </authorList>
    </citation>
    <scope>PROTEIN SEQUENCE</scope>
    <scope>TOXIC DOSE</scope>
    <source>
        <tissue>Venom</tissue>
    </source>
</reference>
<feature type="chain" id="PRO_0000161651" description="Basic phospholipase A2 2">
    <location>
        <begin position="1"/>
        <end position="118"/>
    </location>
</feature>
<feature type="active site" evidence="1">
    <location>
        <position position="48"/>
    </location>
</feature>
<feature type="active site" evidence="1">
    <location>
        <position position="92"/>
    </location>
</feature>
<feature type="binding site" evidence="1">
    <location>
        <position position="28"/>
    </location>
    <ligand>
        <name>Ca(2+)</name>
        <dbReference type="ChEBI" id="CHEBI:29108"/>
    </ligand>
</feature>
<feature type="binding site" evidence="1">
    <location>
        <position position="30"/>
    </location>
    <ligand>
        <name>Ca(2+)</name>
        <dbReference type="ChEBI" id="CHEBI:29108"/>
    </ligand>
</feature>
<feature type="binding site" evidence="1">
    <location>
        <position position="32"/>
    </location>
    <ligand>
        <name>Ca(2+)</name>
        <dbReference type="ChEBI" id="CHEBI:29108"/>
    </ligand>
</feature>
<feature type="binding site" evidence="1">
    <location>
        <position position="49"/>
    </location>
    <ligand>
        <name>Ca(2+)</name>
        <dbReference type="ChEBI" id="CHEBI:29108"/>
    </ligand>
</feature>
<feature type="disulfide bond" evidence="1">
    <location>
        <begin position="11"/>
        <end position="71"/>
    </location>
</feature>
<feature type="disulfide bond" evidence="1">
    <location>
        <begin position="27"/>
        <end position="117"/>
    </location>
</feature>
<feature type="disulfide bond" evidence="1">
    <location>
        <begin position="29"/>
        <end position="45"/>
    </location>
</feature>
<feature type="disulfide bond" evidence="1">
    <location>
        <begin position="44"/>
        <end position="98"/>
    </location>
</feature>
<feature type="disulfide bond" evidence="1">
    <location>
        <begin position="51"/>
        <end position="91"/>
    </location>
</feature>
<feature type="disulfide bond" evidence="1">
    <location>
        <begin position="60"/>
        <end position="84"/>
    </location>
</feature>
<feature type="disulfide bond" evidence="1">
    <location>
        <begin position="78"/>
        <end position="89"/>
    </location>
</feature>
<comment type="function">
    <text>Snake venom phospholipase A2 (PLA2) that inhibits neuromuscular transmission by blocking acetylcholine release from the nerve termini. PLA2 catalyzes the calcium-dependent hydrolysis of the 2-acyl groups in 3-sn-phosphoglycerides.</text>
</comment>
<comment type="catalytic activity">
    <reaction evidence="2 3">
        <text>a 1,2-diacyl-sn-glycero-3-phosphocholine + H2O = a 1-acyl-sn-glycero-3-phosphocholine + a fatty acid + H(+)</text>
        <dbReference type="Rhea" id="RHEA:15801"/>
        <dbReference type="ChEBI" id="CHEBI:15377"/>
        <dbReference type="ChEBI" id="CHEBI:15378"/>
        <dbReference type="ChEBI" id="CHEBI:28868"/>
        <dbReference type="ChEBI" id="CHEBI:57643"/>
        <dbReference type="ChEBI" id="CHEBI:58168"/>
        <dbReference type="EC" id="3.1.1.4"/>
    </reaction>
</comment>
<comment type="cofactor">
    <cofactor evidence="1">
        <name>Ca(2+)</name>
        <dbReference type="ChEBI" id="CHEBI:29108"/>
    </cofactor>
    <text evidence="1">Binds 1 Ca(2+) ion.</text>
</comment>
<comment type="subcellular location">
    <subcellularLocation>
        <location>Secreted</location>
    </subcellularLocation>
</comment>
<comment type="tissue specificity">
    <text>Expressed by the venom gland.</text>
</comment>
<comment type="toxic dose">
    <text evidence="4">LD(50) is 0.045 mg/kg by intravenous injection into mice.</text>
</comment>
<comment type="similarity">
    <text evidence="5">Belongs to the phospholipase A2 family. Group I subfamily. D49 sub-subfamily.</text>
</comment>
<protein>
    <recommendedName>
        <fullName>Basic phospholipase A2 2</fullName>
        <shortName>svPLA2</shortName>
        <ecNumber>3.1.1.4</ecNumber>
    </recommendedName>
    <alternativeName>
        <fullName>Phosphatidylcholine 2-acylhydrolase</fullName>
    </alternativeName>
    <alternativeName>
        <fullName>Phospholipase A2 isozyme II</fullName>
        <shortName>PLA-II</shortName>
    </alternativeName>
</protein>
<dbReference type="EC" id="3.1.1.4"/>
<dbReference type="PIR" id="S01140">
    <property type="entry name" value="S01140"/>
</dbReference>
<dbReference type="SMR" id="P10116"/>
<dbReference type="GO" id="GO:0005576">
    <property type="term" value="C:extracellular region"/>
    <property type="evidence" value="ECO:0007669"/>
    <property type="project" value="UniProtKB-SubCell"/>
</dbReference>
<dbReference type="GO" id="GO:0005509">
    <property type="term" value="F:calcium ion binding"/>
    <property type="evidence" value="ECO:0007669"/>
    <property type="project" value="InterPro"/>
</dbReference>
<dbReference type="GO" id="GO:0047498">
    <property type="term" value="F:calcium-dependent phospholipase A2 activity"/>
    <property type="evidence" value="ECO:0007669"/>
    <property type="project" value="TreeGrafter"/>
</dbReference>
<dbReference type="GO" id="GO:0005543">
    <property type="term" value="F:phospholipid binding"/>
    <property type="evidence" value="ECO:0007669"/>
    <property type="project" value="TreeGrafter"/>
</dbReference>
<dbReference type="GO" id="GO:0090729">
    <property type="term" value="F:toxin activity"/>
    <property type="evidence" value="ECO:0007669"/>
    <property type="project" value="UniProtKB-KW"/>
</dbReference>
<dbReference type="GO" id="GO:0050482">
    <property type="term" value="P:arachidonate secretion"/>
    <property type="evidence" value="ECO:0007669"/>
    <property type="project" value="InterPro"/>
</dbReference>
<dbReference type="GO" id="GO:0016042">
    <property type="term" value="P:lipid catabolic process"/>
    <property type="evidence" value="ECO:0007669"/>
    <property type="project" value="UniProtKB-KW"/>
</dbReference>
<dbReference type="GO" id="GO:0006644">
    <property type="term" value="P:phospholipid metabolic process"/>
    <property type="evidence" value="ECO:0007669"/>
    <property type="project" value="InterPro"/>
</dbReference>
<dbReference type="CDD" id="cd00125">
    <property type="entry name" value="PLA2c"/>
    <property type="match status" value="1"/>
</dbReference>
<dbReference type="FunFam" id="1.20.90.10:FF:000007">
    <property type="entry name" value="Acidic phospholipase A2"/>
    <property type="match status" value="1"/>
</dbReference>
<dbReference type="Gene3D" id="1.20.90.10">
    <property type="entry name" value="Phospholipase A2 domain"/>
    <property type="match status" value="1"/>
</dbReference>
<dbReference type="InterPro" id="IPR001211">
    <property type="entry name" value="PLipase_A2"/>
</dbReference>
<dbReference type="InterPro" id="IPR033112">
    <property type="entry name" value="PLipase_A2_Asp_AS"/>
</dbReference>
<dbReference type="InterPro" id="IPR016090">
    <property type="entry name" value="PLipase_A2_dom"/>
</dbReference>
<dbReference type="InterPro" id="IPR036444">
    <property type="entry name" value="PLipase_A2_dom_sf"/>
</dbReference>
<dbReference type="InterPro" id="IPR033113">
    <property type="entry name" value="PLipase_A2_His_AS"/>
</dbReference>
<dbReference type="PANTHER" id="PTHR11716:SF100">
    <property type="entry name" value="PHOSPHOLIPASE A2"/>
    <property type="match status" value="1"/>
</dbReference>
<dbReference type="PANTHER" id="PTHR11716">
    <property type="entry name" value="PHOSPHOLIPASE A2 FAMILY MEMBER"/>
    <property type="match status" value="1"/>
</dbReference>
<dbReference type="Pfam" id="PF00068">
    <property type="entry name" value="Phospholip_A2_1"/>
    <property type="match status" value="1"/>
</dbReference>
<dbReference type="PRINTS" id="PR00389">
    <property type="entry name" value="PHPHLIPASEA2"/>
</dbReference>
<dbReference type="SMART" id="SM00085">
    <property type="entry name" value="PA2c"/>
    <property type="match status" value="1"/>
</dbReference>
<dbReference type="SUPFAM" id="SSF48619">
    <property type="entry name" value="Phospholipase A2, PLA2"/>
    <property type="match status" value="1"/>
</dbReference>
<dbReference type="PROSITE" id="PS00119">
    <property type="entry name" value="PA2_ASP"/>
    <property type="match status" value="1"/>
</dbReference>
<dbReference type="PROSITE" id="PS00118">
    <property type="entry name" value="PA2_HIS"/>
    <property type="match status" value="1"/>
</dbReference>
<proteinExistence type="evidence at protein level"/>
<name>PA2B2_LATCO</name>